<gene>
    <name evidence="1" type="primary">hutG</name>
    <name type="ordered locus">SAV2334</name>
</gene>
<accession>P63570</accession>
<accession>Q99RT9</accession>
<proteinExistence type="inferred from homology"/>
<keyword id="KW-0369">Histidine metabolism</keyword>
<keyword id="KW-0378">Hydrolase</keyword>
<keyword id="KW-0464">Manganese</keyword>
<keyword id="KW-0479">Metal-binding</keyword>
<reference key="1">
    <citation type="journal article" date="2001" name="Lancet">
        <title>Whole genome sequencing of meticillin-resistant Staphylococcus aureus.</title>
        <authorList>
            <person name="Kuroda M."/>
            <person name="Ohta T."/>
            <person name="Uchiyama I."/>
            <person name="Baba T."/>
            <person name="Yuzawa H."/>
            <person name="Kobayashi I."/>
            <person name="Cui L."/>
            <person name="Oguchi A."/>
            <person name="Aoki K."/>
            <person name="Nagai Y."/>
            <person name="Lian J.-Q."/>
            <person name="Ito T."/>
            <person name="Kanamori M."/>
            <person name="Matsumaru H."/>
            <person name="Maruyama A."/>
            <person name="Murakami H."/>
            <person name="Hosoyama A."/>
            <person name="Mizutani-Ui Y."/>
            <person name="Takahashi N.K."/>
            <person name="Sawano T."/>
            <person name="Inoue R."/>
            <person name="Kaito C."/>
            <person name="Sekimizu K."/>
            <person name="Hirakawa H."/>
            <person name="Kuhara S."/>
            <person name="Goto S."/>
            <person name="Yabuzaki J."/>
            <person name="Kanehisa M."/>
            <person name="Yamashita A."/>
            <person name="Oshima K."/>
            <person name="Furuya K."/>
            <person name="Yoshino C."/>
            <person name="Shiba T."/>
            <person name="Hattori M."/>
            <person name="Ogasawara N."/>
            <person name="Hayashi H."/>
            <person name="Hiramatsu K."/>
        </authorList>
    </citation>
    <scope>NUCLEOTIDE SEQUENCE [LARGE SCALE GENOMIC DNA]</scope>
    <source>
        <strain>Mu50 / ATCC 700699</strain>
    </source>
</reference>
<name>HUTG_STAAM</name>
<dbReference type="EC" id="3.5.3.8" evidence="1"/>
<dbReference type="EMBL" id="BA000017">
    <property type="protein sequence ID" value="BAB58496.1"/>
    <property type="molecule type" value="Genomic_DNA"/>
</dbReference>
<dbReference type="RefSeq" id="WP_000277968.1">
    <property type="nucleotide sequence ID" value="NC_002758.2"/>
</dbReference>
<dbReference type="SMR" id="P63570"/>
<dbReference type="KEGG" id="sav:SAV2334"/>
<dbReference type="HOGENOM" id="CLU_039478_2_0_9"/>
<dbReference type="PhylomeDB" id="P63570"/>
<dbReference type="UniPathway" id="UPA00379">
    <property type="reaction ID" value="UER00552"/>
</dbReference>
<dbReference type="Proteomes" id="UP000002481">
    <property type="component" value="Chromosome"/>
</dbReference>
<dbReference type="GO" id="GO:0008783">
    <property type="term" value="F:agmatinase activity"/>
    <property type="evidence" value="ECO:0007669"/>
    <property type="project" value="TreeGrafter"/>
</dbReference>
<dbReference type="GO" id="GO:0050415">
    <property type="term" value="F:formimidoylglutamase activity"/>
    <property type="evidence" value="ECO:0007669"/>
    <property type="project" value="UniProtKB-UniRule"/>
</dbReference>
<dbReference type="GO" id="GO:0030145">
    <property type="term" value="F:manganese ion binding"/>
    <property type="evidence" value="ECO:0007669"/>
    <property type="project" value="UniProtKB-UniRule"/>
</dbReference>
<dbReference type="GO" id="GO:0019556">
    <property type="term" value="P:L-histidine catabolic process to glutamate and formamide"/>
    <property type="evidence" value="ECO:0007669"/>
    <property type="project" value="UniProtKB-UniPathway"/>
</dbReference>
<dbReference type="GO" id="GO:0019557">
    <property type="term" value="P:L-histidine catabolic process to glutamate and formate"/>
    <property type="evidence" value="ECO:0007669"/>
    <property type="project" value="UniProtKB-UniPathway"/>
</dbReference>
<dbReference type="GO" id="GO:0033389">
    <property type="term" value="P:putrescine biosynthetic process from arginine, via agmatine"/>
    <property type="evidence" value="ECO:0007669"/>
    <property type="project" value="TreeGrafter"/>
</dbReference>
<dbReference type="CDD" id="cd09988">
    <property type="entry name" value="Formimidoylglutamase"/>
    <property type="match status" value="1"/>
</dbReference>
<dbReference type="FunFam" id="3.40.800.10:FF:000015">
    <property type="entry name" value="Formimidoylglutamase"/>
    <property type="match status" value="1"/>
</dbReference>
<dbReference type="Gene3D" id="3.40.800.10">
    <property type="entry name" value="Ureohydrolase domain"/>
    <property type="match status" value="1"/>
</dbReference>
<dbReference type="HAMAP" id="MF_00737">
    <property type="entry name" value="Formimidoylglutam"/>
    <property type="match status" value="1"/>
</dbReference>
<dbReference type="InterPro" id="IPR005923">
    <property type="entry name" value="HutG"/>
</dbReference>
<dbReference type="InterPro" id="IPR006035">
    <property type="entry name" value="Ureohydrolase"/>
</dbReference>
<dbReference type="InterPro" id="IPR023696">
    <property type="entry name" value="Ureohydrolase_dom_sf"/>
</dbReference>
<dbReference type="NCBIfam" id="TIGR01227">
    <property type="entry name" value="hutG"/>
    <property type="match status" value="1"/>
</dbReference>
<dbReference type="PANTHER" id="PTHR11358">
    <property type="entry name" value="ARGINASE/AGMATINASE"/>
    <property type="match status" value="1"/>
</dbReference>
<dbReference type="PANTHER" id="PTHR11358:SF35">
    <property type="entry name" value="FORMIMIDOYLGLUTAMASE"/>
    <property type="match status" value="1"/>
</dbReference>
<dbReference type="Pfam" id="PF00491">
    <property type="entry name" value="Arginase"/>
    <property type="match status" value="1"/>
</dbReference>
<dbReference type="PIRSF" id="PIRSF036979">
    <property type="entry name" value="Arginase"/>
    <property type="match status" value="1"/>
</dbReference>
<dbReference type="SUPFAM" id="SSF52768">
    <property type="entry name" value="Arginase/deacetylase"/>
    <property type="match status" value="1"/>
</dbReference>
<dbReference type="PROSITE" id="PS51409">
    <property type="entry name" value="ARGINASE_2"/>
    <property type="match status" value="1"/>
</dbReference>
<organism>
    <name type="scientific">Staphylococcus aureus (strain Mu50 / ATCC 700699)</name>
    <dbReference type="NCBI Taxonomy" id="158878"/>
    <lineage>
        <taxon>Bacteria</taxon>
        <taxon>Bacillati</taxon>
        <taxon>Bacillota</taxon>
        <taxon>Bacilli</taxon>
        <taxon>Bacillales</taxon>
        <taxon>Staphylococcaceae</taxon>
        <taxon>Staphylococcus</taxon>
    </lineage>
</organism>
<sequence length="311" mass="34513">MYKQGEPNLWTGRLDSETDPKKFRHFQTVTFEDLSKLEKSSMPSGVGILGYAVDKGVALNKGRIGAKEGPDAIKQAFAGLPDLNQCETLVDYGNVYHDHEELIDTQKEFAMLAAKSIANHRQTFLLGGGHDIAYAQYLATRKVYPTQSIGVINIDAHFDTRAEQQSTSGTSFRQILEEDENTDYLVLGIAQGGNTQSLFDYAKEKKIDYVFADELLSHVSPTIKDMIERFVHEHDVIMFTICMDVIDSAFAPGVSAPAVLGLYPHTVLELAKRIIPSDKVSSVSIAEMNPTYDADNRTAKLVANLVHHFLK</sequence>
<feature type="chain" id="PRO_0000173767" description="Formimidoylglutamase">
    <location>
        <begin position="1"/>
        <end position="311"/>
    </location>
</feature>
<feature type="binding site" evidence="1">
    <location>
        <position position="130"/>
    </location>
    <ligand>
        <name>Mn(2+)</name>
        <dbReference type="ChEBI" id="CHEBI:29035"/>
        <label>1</label>
    </ligand>
</feature>
<feature type="binding site" evidence="1">
    <location>
        <position position="155"/>
    </location>
    <ligand>
        <name>Mn(2+)</name>
        <dbReference type="ChEBI" id="CHEBI:29035"/>
        <label>1</label>
    </ligand>
</feature>
<feature type="binding site" evidence="1">
    <location>
        <position position="155"/>
    </location>
    <ligand>
        <name>Mn(2+)</name>
        <dbReference type="ChEBI" id="CHEBI:29035"/>
        <label>2</label>
    </ligand>
</feature>
<feature type="binding site" evidence="1">
    <location>
        <position position="157"/>
    </location>
    <ligand>
        <name>Mn(2+)</name>
        <dbReference type="ChEBI" id="CHEBI:29035"/>
        <label>2</label>
    </ligand>
</feature>
<feature type="binding site" evidence="1">
    <location>
        <position position="159"/>
    </location>
    <ligand>
        <name>Mn(2+)</name>
        <dbReference type="ChEBI" id="CHEBI:29035"/>
        <label>1</label>
    </ligand>
</feature>
<feature type="binding site" evidence="1">
    <location>
        <position position="242"/>
    </location>
    <ligand>
        <name>Mn(2+)</name>
        <dbReference type="ChEBI" id="CHEBI:29035"/>
        <label>1</label>
    </ligand>
</feature>
<feature type="binding site" evidence="1">
    <location>
        <position position="242"/>
    </location>
    <ligand>
        <name>Mn(2+)</name>
        <dbReference type="ChEBI" id="CHEBI:29035"/>
        <label>2</label>
    </ligand>
</feature>
<feature type="binding site" evidence="1">
    <location>
        <position position="244"/>
    </location>
    <ligand>
        <name>Mn(2+)</name>
        <dbReference type="ChEBI" id="CHEBI:29035"/>
        <label>2</label>
    </ligand>
</feature>
<protein>
    <recommendedName>
        <fullName evidence="1">Formimidoylglutamase</fullName>
        <ecNumber evidence="1">3.5.3.8</ecNumber>
    </recommendedName>
    <alternativeName>
        <fullName evidence="1">Formiminoglutamase</fullName>
    </alternativeName>
    <alternativeName>
        <fullName evidence="1">Formiminoglutamate hydrolase</fullName>
    </alternativeName>
</protein>
<evidence type="ECO:0000255" key="1">
    <source>
        <dbReference type="HAMAP-Rule" id="MF_00737"/>
    </source>
</evidence>
<comment type="function">
    <text evidence="1">Catalyzes the conversion of N-formimidoyl-L-glutamate to L-glutamate and formamide.</text>
</comment>
<comment type="catalytic activity">
    <reaction evidence="1">
        <text>N-formimidoyl-L-glutamate + H2O = formamide + L-glutamate</text>
        <dbReference type="Rhea" id="RHEA:22492"/>
        <dbReference type="ChEBI" id="CHEBI:15377"/>
        <dbReference type="ChEBI" id="CHEBI:16397"/>
        <dbReference type="ChEBI" id="CHEBI:29985"/>
        <dbReference type="ChEBI" id="CHEBI:58928"/>
        <dbReference type="EC" id="3.5.3.8"/>
    </reaction>
</comment>
<comment type="cofactor">
    <cofactor evidence="1">
        <name>Mn(2+)</name>
        <dbReference type="ChEBI" id="CHEBI:29035"/>
    </cofactor>
    <text evidence="1">Binds 2 manganese ions per subunit.</text>
</comment>
<comment type="pathway">
    <text evidence="1">Amino-acid degradation; L-histidine degradation into L-glutamate; L-glutamate from N-formimidoyl-L-glutamate (hydrolase route): step 1/1.</text>
</comment>
<comment type="similarity">
    <text evidence="1">Belongs to the arginase family.</text>
</comment>